<accession>Q02T91</accession>
<protein>
    <recommendedName>
        <fullName evidence="1">Large ribosomal subunit protein uL11</fullName>
    </recommendedName>
    <alternativeName>
        <fullName evidence="2">50S ribosomal protein L11</fullName>
    </alternativeName>
</protein>
<evidence type="ECO:0000255" key="1">
    <source>
        <dbReference type="HAMAP-Rule" id="MF_00736"/>
    </source>
</evidence>
<evidence type="ECO:0000305" key="2"/>
<keyword id="KW-0488">Methylation</keyword>
<keyword id="KW-0687">Ribonucleoprotein</keyword>
<keyword id="KW-0689">Ribosomal protein</keyword>
<keyword id="KW-0694">RNA-binding</keyword>
<keyword id="KW-0699">rRNA-binding</keyword>
<gene>
    <name evidence="1" type="primary">rplK</name>
    <name type="ordered locus">PA14_08720</name>
</gene>
<dbReference type="EMBL" id="CP000438">
    <property type="protein sequence ID" value="ABJ13545.1"/>
    <property type="molecule type" value="Genomic_DNA"/>
</dbReference>
<dbReference type="RefSeq" id="WP_003093751.1">
    <property type="nucleotide sequence ID" value="NZ_CP034244.1"/>
</dbReference>
<dbReference type="SMR" id="Q02T91"/>
<dbReference type="GeneID" id="77219187"/>
<dbReference type="KEGG" id="pau:PA14_08720"/>
<dbReference type="PseudoCAP" id="PA14_08720"/>
<dbReference type="HOGENOM" id="CLU_074237_2_0_6"/>
<dbReference type="BioCyc" id="PAER208963:G1G74-725-MONOMER"/>
<dbReference type="Proteomes" id="UP000000653">
    <property type="component" value="Chromosome"/>
</dbReference>
<dbReference type="GO" id="GO:0022625">
    <property type="term" value="C:cytosolic large ribosomal subunit"/>
    <property type="evidence" value="ECO:0007669"/>
    <property type="project" value="TreeGrafter"/>
</dbReference>
<dbReference type="GO" id="GO:0070180">
    <property type="term" value="F:large ribosomal subunit rRNA binding"/>
    <property type="evidence" value="ECO:0007669"/>
    <property type="project" value="UniProtKB-UniRule"/>
</dbReference>
<dbReference type="GO" id="GO:0003735">
    <property type="term" value="F:structural constituent of ribosome"/>
    <property type="evidence" value="ECO:0007669"/>
    <property type="project" value="InterPro"/>
</dbReference>
<dbReference type="GO" id="GO:0006412">
    <property type="term" value="P:translation"/>
    <property type="evidence" value="ECO:0007669"/>
    <property type="project" value="UniProtKB-UniRule"/>
</dbReference>
<dbReference type="CDD" id="cd00349">
    <property type="entry name" value="Ribosomal_L11"/>
    <property type="match status" value="1"/>
</dbReference>
<dbReference type="FunFam" id="1.10.10.250:FF:000001">
    <property type="entry name" value="50S ribosomal protein L11"/>
    <property type="match status" value="1"/>
</dbReference>
<dbReference type="FunFam" id="3.30.1550.10:FF:000001">
    <property type="entry name" value="50S ribosomal protein L11"/>
    <property type="match status" value="1"/>
</dbReference>
<dbReference type="Gene3D" id="1.10.10.250">
    <property type="entry name" value="Ribosomal protein L11, C-terminal domain"/>
    <property type="match status" value="1"/>
</dbReference>
<dbReference type="Gene3D" id="3.30.1550.10">
    <property type="entry name" value="Ribosomal protein L11/L12, N-terminal domain"/>
    <property type="match status" value="1"/>
</dbReference>
<dbReference type="HAMAP" id="MF_00736">
    <property type="entry name" value="Ribosomal_uL11"/>
    <property type="match status" value="1"/>
</dbReference>
<dbReference type="InterPro" id="IPR000911">
    <property type="entry name" value="Ribosomal_uL11"/>
</dbReference>
<dbReference type="InterPro" id="IPR006519">
    <property type="entry name" value="Ribosomal_uL11_bac-typ"/>
</dbReference>
<dbReference type="InterPro" id="IPR020783">
    <property type="entry name" value="Ribosomal_uL11_C"/>
</dbReference>
<dbReference type="InterPro" id="IPR036769">
    <property type="entry name" value="Ribosomal_uL11_C_sf"/>
</dbReference>
<dbReference type="InterPro" id="IPR020785">
    <property type="entry name" value="Ribosomal_uL11_CS"/>
</dbReference>
<dbReference type="InterPro" id="IPR020784">
    <property type="entry name" value="Ribosomal_uL11_N"/>
</dbReference>
<dbReference type="InterPro" id="IPR036796">
    <property type="entry name" value="Ribosomal_uL11_N_sf"/>
</dbReference>
<dbReference type="NCBIfam" id="TIGR01632">
    <property type="entry name" value="L11_bact"/>
    <property type="match status" value="1"/>
</dbReference>
<dbReference type="PANTHER" id="PTHR11661">
    <property type="entry name" value="60S RIBOSOMAL PROTEIN L12"/>
    <property type="match status" value="1"/>
</dbReference>
<dbReference type="PANTHER" id="PTHR11661:SF1">
    <property type="entry name" value="LARGE RIBOSOMAL SUBUNIT PROTEIN UL11M"/>
    <property type="match status" value="1"/>
</dbReference>
<dbReference type="Pfam" id="PF00298">
    <property type="entry name" value="Ribosomal_L11"/>
    <property type="match status" value="1"/>
</dbReference>
<dbReference type="Pfam" id="PF03946">
    <property type="entry name" value="Ribosomal_L11_N"/>
    <property type="match status" value="1"/>
</dbReference>
<dbReference type="SMART" id="SM00649">
    <property type="entry name" value="RL11"/>
    <property type="match status" value="1"/>
</dbReference>
<dbReference type="SUPFAM" id="SSF54747">
    <property type="entry name" value="Ribosomal L11/L12e N-terminal domain"/>
    <property type="match status" value="1"/>
</dbReference>
<dbReference type="SUPFAM" id="SSF46906">
    <property type="entry name" value="Ribosomal protein L11, C-terminal domain"/>
    <property type="match status" value="1"/>
</dbReference>
<dbReference type="PROSITE" id="PS00359">
    <property type="entry name" value="RIBOSOMAL_L11"/>
    <property type="match status" value="1"/>
</dbReference>
<feature type="chain" id="PRO_1000046243" description="Large ribosomal subunit protein uL11">
    <location>
        <begin position="1"/>
        <end position="143"/>
    </location>
</feature>
<organism>
    <name type="scientific">Pseudomonas aeruginosa (strain UCBPP-PA14)</name>
    <dbReference type="NCBI Taxonomy" id="208963"/>
    <lineage>
        <taxon>Bacteria</taxon>
        <taxon>Pseudomonadati</taxon>
        <taxon>Pseudomonadota</taxon>
        <taxon>Gammaproteobacteria</taxon>
        <taxon>Pseudomonadales</taxon>
        <taxon>Pseudomonadaceae</taxon>
        <taxon>Pseudomonas</taxon>
    </lineage>
</organism>
<comment type="function">
    <text evidence="1">Forms part of the ribosomal stalk which helps the ribosome interact with GTP-bound translation factors.</text>
</comment>
<comment type="subunit">
    <text evidence="1">Part of the ribosomal stalk of the 50S ribosomal subunit. Interacts with L10 and the large rRNA to form the base of the stalk. L10 forms an elongated spine to which L12 dimers bind in a sequential fashion forming a multimeric L10(L12)X complex.</text>
</comment>
<comment type="PTM">
    <text evidence="1">One or more lysine residues are methylated.</text>
</comment>
<comment type="similarity">
    <text evidence="1">Belongs to the universal ribosomal protein uL11 family.</text>
</comment>
<reference key="1">
    <citation type="journal article" date="2006" name="Genome Biol.">
        <title>Genomic analysis reveals that Pseudomonas aeruginosa virulence is combinatorial.</title>
        <authorList>
            <person name="Lee D.G."/>
            <person name="Urbach J.M."/>
            <person name="Wu G."/>
            <person name="Liberati N.T."/>
            <person name="Feinbaum R.L."/>
            <person name="Miyata S."/>
            <person name="Diggins L.T."/>
            <person name="He J."/>
            <person name="Saucier M."/>
            <person name="Deziel E."/>
            <person name="Friedman L."/>
            <person name="Li L."/>
            <person name="Grills G."/>
            <person name="Montgomery K."/>
            <person name="Kucherlapati R."/>
            <person name="Rahme L.G."/>
            <person name="Ausubel F.M."/>
        </authorList>
    </citation>
    <scope>NUCLEOTIDE SEQUENCE [LARGE SCALE GENOMIC DNA]</scope>
    <source>
        <strain>UCBPP-PA14</strain>
    </source>
</reference>
<sequence>MAKKIQAYIKLQVKAGQANPSPPVGPALGQHGVNIMEFCKAFNAKTQGQEPGLPTPVIITVYSDRSFTFETKSTPAAVLLKKAAGITSGSARPNSQKVGTVTRAQLEEIAKTKQADLTAADLDAAVRTIAGSARSMGLNVEGV</sequence>
<name>RL11_PSEAB</name>
<proteinExistence type="inferred from homology"/>